<organism>
    <name type="scientific">Clostridium botulinum (strain Langeland / NCTC 10281 / Type F)</name>
    <dbReference type="NCBI Taxonomy" id="441772"/>
    <lineage>
        <taxon>Bacteria</taxon>
        <taxon>Bacillati</taxon>
        <taxon>Bacillota</taxon>
        <taxon>Clostridia</taxon>
        <taxon>Eubacteriales</taxon>
        <taxon>Clostridiaceae</taxon>
        <taxon>Clostridium</taxon>
    </lineage>
</organism>
<evidence type="ECO:0000255" key="1">
    <source>
        <dbReference type="HAMAP-Rule" id="MF_01184"/>
    </source>
</evidence>
<name>XPT2_CLOBL</name>
<sequence>MKLLEDKILKEGILLEGNILKVDSFLNHQMDVKLFNEIGKEFKRRFEGCNINKILTIEASGIGIATIVSQYFDFCPVVFAKKVDAANMDKDTYESKVHSFTKNKTYNVRVSKKYINKGDKILLIDDFLANGCAALGLIDIIKQGGAELAGVGIAIEKGFQKGRKELEKVGAKVESLAILDKIENDKVYFK</sequence>
<reference key="1">
    <citation type="submission" date="2007-06" db="EMBL/GenBank/DDBJ databases">
        <authorList>
            <person name="Brinkac L.M."/>
            <person name="Daugherty S."/>
            <person name="Dodson R.J."/>
            <person name="Madupu R."/>
            <person name="Brown J.L."/>
            <person name="Bruce D."/>
            <person name="Detter C."/>
            <person name="Munk C."/>
            <person name="Smith L.A."/>
            <person name="Smith T.J."/>
            <person name="White O."/>
            <person name="Brettin T.S."/>
        </authorList>
    </citation>
    <scope>NUCLEOTIDE SEQUENCE [LARGE SCALE GENOMIC DNA]</scope>
    <source>
        <strain>Langeland / NCTC 10281 / Type F</strain>
    </source>
</reference>
<gene>
    <name evidence="1" type="primary">xpt2</name>
    <name type="ordered locus">CLI_1225</name>
</gene>
<protein>
    <recommendedName>
        <fullName evidence="1">Xanthine phosphoribosyltransferase 2</fullName>
        <shortName evidence="1">XPRTase 2</shortName>
        <ecNumber evidence="1">2.4.2.22</ecNumber>
    </recommendedName>
</protein>
<comment type="function">
    <text evidence="1">Converts the preformed base xanthine, a product of nucleic acid breakdown, to xanthosine 5'-monophosphate (XMP), so it can be reused for RNA or DNA synthesis.</text>
</comment>
<comment type="catalytic activity">
    <reaction evidence="1">
        <text>XMP + diphosphate = xanthine + 5-phospho-alpha-D-ribose 1-diphosphate</text>
        <dbReference type="Rhea" id="RHEA:10800"/>
        <dbReference type="ChEBI" id="CHEBI:17712"/>
        <dbReference type="ChEBI" id="CHEBI:33019"/>
        <dbReference type="ChEBI" id="CHEBI:57464"/>
        <dbReference type="ChEBI" id="CHEBI:58017"/>
        <dbReference type="EC" id="2.4.2.22"/>
    </reaction>
</comment>
<comment type="pathway">
    <text evidence="1">Purine metabolism; XMP biosynthesis via salvage pathway; XMP from xanthine: step 1/1.</text>
</comment>
<comment type="subunit">
    <text evidence="1">Homodimer.</text>
</comment>
<comment type="subcellular location">
    <subcellularLocation>
        <location evidence="1">Cytoplasm</location>
    </subcellularLocation>
</comment>
<comment type="similarity">
    <text evidence="1">Belongs to the purine/pyrimidine phosphoribosyltransferase family. Xpt subfamily.</text>
</comment>
<proteinExistence type="inferred from homology"/>
<feature type="chain" id="PRO_0000339684" description="Xanthine phosphoribosyltransferase 2">
    <location>
        <begin position="1"/>
        <end position="190"/>
    </location>
</feature>
<feature type="binding site" evidence="1">
    <location>
        <position position="20"/>
    </location>
    <ligand>
        <name>xanthine</name>
        <dbReference type="ChEBI" id="CHEBI:17712"/>
    </ligand>
</feature>
<feature type="binding site" evidence="1">
    <location>
        <position position="27"/>
    </location>
    <ligand>
        <name>xanthine</name>
        <dbReference type="ChEBI" id="CHEBI:17712"/>
    </ligand>
</feature>
<feature type="binding site" evidence="1">
    <location>
        <begin position="129"/>
        <end position="133"/>
    </location>
    <ligand>
        <name>5-phospho-alpha-D-ribose 1-diphosphate</name>
        <dbReference type="ChEBI" id="CHEBI:58017"/>
    </ligand>
</feature>
<feature type="binding site" evidence="1">
    <location>
        <position position="157"/>
    </location>
    <ligand>
        <name>xanthine</name>
        <dbReference type="ChEBI" id="CHEBI:17712"/>
    </ligand>
</feature>
<keyword id="KW-0963">Cytoplasm</keyword>
<keyword id="KW-0328">Glycosyltransferase</keyword>
<keyword id="KW-0660">Purine salvage</keyword>
<keyword id="KW-0808">Transferase</keyword>
<dbReference type="EC" id="2.4.2.22" evidence="1"/>
<dbReference type="EMBL" id="CP000728">
    <property type="protein sequence ID" value="ABS42668.1"/>
    <property type="molecule type" value="Genomic_DNA"/>
</dbReference>
<dbReference type="RefSeq" id="WP_011988027.1">
    <property type="nucleotide sequence ID" value="NC_009699.1"/>
</dbReference>
<dbReference type="SMR" id="A7GCI1"/>
<dbReference type="KEGG" id="cbf:CLI_1225"/>
<dbReference type="HOGENOM" id="CLU_099015_0_0_9"/>
<dbReference type="UniPathway" id="UPA00602">
    <property type="reaction ID" value="UER00658"/>
</dbReference>
<dbReference type="Proteomes" id="UP000002410">
    <property type="component" value="Chromosome"/>
</dbReference>
<dbReference type="GO" id="GO:0005737">
    <property type="term" value="C:cytoplasm"/>
    <property type="evidence" value="ECO:0007669"/>
    <property type="project" value="UniProtKB-SubCell"/>
</dbReference>
<dbReference type="GO" id="GO:0000310">
    <property type="term" value="F:xanthine phosphoribosyltransferase activity"/>
    <property type="evidence" value="ECO:0007669"/>
    <property type="project" value="UniProtKB-UniRule"/>
</dbReference>
<dbReference type="GO" id="GO:0006166">
    <property type="term" value="P:purine ribonucleoside salvage"/>
    <property type="evidence" value="ECO:0007669"/>
    <property type="project" value="UniProtKB-KW"/>
</dbReference>
<dbReference type="GO" id="GO:0046110">
    <property type="term" value="P:xanthine metabolic process"/>
    <property type="evidence" value="ECO:0007669"/>
    <property type="project" value="InterPro"/>
</dbReference>
<dbReference type="GO" id="GO:0032265">
    <property type="term" value="P:XMP salvage"/>
    <property type="evidence" value="ECO:0007669"/>
    <property type="project" value="UniProtKB-UniRule"/>
</dbReference>
<dbReference type="CDD" id="cd06223">
    <property type="entry name" value="PRTases_typeI"/>
    <property type="match status" value="1"/>
</dbReference>
<dbReference type="Gene3D" id="3.40.50.2020">
    <property type="match status" value="1"/>
</dbReference>
<dbReference type="HAMAP" id="MF_01184">
    <property type="entry name" value="XPRTase"/>
    <property type="match status" value="1"/>
</dbReference>
<dbReference type="InterPro" id="IPR000836">
    <property type="entry name" value="PRibTrfase_dom"/>
</dbReference>
<dbReference type="InterPro" id="IPR029057">
    <property type="entry name" value="PRTase-like"/>
</dbReference>
<dbReference type="InterPro" id="IPR050118">
    <property type="entry name" value="Pur/Pyrimidine_PRTase"/>
</dbReference>
<dbReference type="InterPro" id="IPR010079">
    <property type="entry name" value="Xanthine_PRibTrfase"/>
</dbReference>
<dbReference type="NCBIfam" id="NF006671">
    <property type="entry name" value="PRK09219.1"/>
    <property type="match status" value="1"/>
</dbReference>
<dbReference type="NCBIfam" id="TIGR01744">
    <property type="entry name" value="XPRTase"/>
    <property type="match status" value="1"/>
</dbReference>
<dbReference type="PANTHER" id="PTHR43864">
    <property type="entry name" value="HYPOXANTHINE/GUANINE PHOSPHORIBOSYLTRANSFERASE"/>
    <property type="match status" value="1"/>
</dbReference>
<dbReference type="PANTHER" id="PTHR43864:SF1">
    <property type="entry name" value="XANTHINE PHOSPHORIBOSYLTRANSFERASE"/>
    <property type="match status" value="1"/>
</dbReference>
<dbReference type="Pfam" id="PF00156">
    <property type="entry name" value="Pribosyltran"/>
    <property type="match status" value="1"/>
</dbReference>
<dbReference type="SUPFAM" id="SSF53271">
    <property type="entry name" value="PRTase-like"/>
    <property type="match status" value="1"/>
</dbReference>
<accession>A7GCI1</accession>